<accession>Q9Z431</accession>
<geneLocation type="plasmid">
    <name>NAH7</name>
</geneLocation>
<keyword id="KW-0058">Aromatic hydrocarbons catabolism</keyword>
<keyword id="KW-0413">Isomerase</keyword>
<keyword id="KW-0614">Plasmid</keyword>
<protein>
    <recommendedName>
        <fullName>2-hydroxymuconate tautomerase</fullName>
        <ecNumber>5.3.2.6</ecNumber>
    </recommendedName>
    <alternativeName>
        <fullName>4-oxalocrotonate tautomerase</fullName>
        <shortName>4-OT</shortName>
    </alternativeName>
</protein>
<organism>
    <name type="scientific">Pseudomonas putida</name>
    <name type="common">Arthrobacter siderocapsulatus</name>
    <dbReference type="NCBI Taxonomy" id="303"/>
    <lineage>
        <taxon>Bacteria</taxon>
        <taxon>Pseudomonadati</taxon>
        <taxon>Pseudomonadota</taxon>
        <taxon>Gammaproteobacteria</taxon>
        <taxon>Pseudomonadales</taxon>
        <taxon>Pseudomonadaceae</taxon>
        <taxon>Pseudomonas</taxon>
    </lineage>
</organism>
<reference key="1">
    <citation type="journal article" date="1999" name="J. Bacteriol.">
        <title>NahY, a catabolic plasmid-encoded receptor required for chemotaxis of Pseudomonas putida to the aromatic hydrocarbon naphthalene.</title>
        <authorList>
            <person name="Grimm A.C."/>
            <person name="Harwood C.S."/>
        </authorList>
    </citation>
    <scope>NUCLEOTIDE SEQUENCE [GENOMIC DNA]</scope>
    <source>
        <strain>ATCC 17485 / DSM 50208 / JCM 6158 / NCIMB 12092 / Stanier 111 / Biotype A</strain>
    </source>
</reference>
<feature type="initiator methionine" description="Removed" evidence="1">
    <location>
        <position position="1"/>
    </location>
</feature>
<feature type="chain" id="PRO_0000209516" description="2-hydroxymuconate tautomerase">
    <location>
        <begin position="2"/>
        <end position="63"/>
    </location>
</feature>
<feature type="active site" description="Proton acceptor; via imino nitrogen" evidence="1">
    <location>
        <position position="2"/>
    </location>
</feature>
<comment type="function">
    <text>Catalyzes the ketonization of 2-hydroxymuconate stereoselectively to yield 2-oxo-3-hexenedioate.</text>
</comment>
<comment type="catalytic activity">
    <reaction>
        <text>(2Z,4E)-2-hydroxyhexa-2,4-dienedioate = (3E)-2-oxohex-3-enedioate</text>
        <dbReference type="Rhea" id="RHEA:33431"/>
        <dbReference type="ChEBI" id="CHEBI:28080"/>
        <dbReference type="ChEBI" id="CHEBI:64908"/>
        <dbReference type="EC" id="5.3.2.6"/>
    </reaction>
</comment>
<comment type="pathway">
    <text>Aromatic compound metabolism; salicylate degradation.</text>
</comment>
<comment type="subunit">
    <text evidence="1">Homohexamer.</text>
</comment>
<comment type="similarity">
    <text evidence="2">Belongs to the 4-oxalocrotonate tautomerase family.</text>
</comment>
<sequence length="63" mass="7122">MPIAQLYILEGRSDEQKETLIREVSEAMSRSLDAPIERVRVIITEMPKNHFGIGGEPASKLNR</sequence>
<gene>
    <name type="primary">nahJ</name>
</gene>
<evidence type="ECO:0000250" key="1"/>
<evidence type="ECO:0000305" key="2"/>
<name>4OT3_PSEPU</name>
<dbReference type="EC" id="5.3.2.6"/>
<dbReference type="EMBL" id="AF100302">
    <property type="protein sequence ID" value="AAD13221.1"/>
    <property type="molecule type" value="Genomic_DNA"/>
</dbReference>
<dbReference type="RefSeq" id="WP_011475395.1">
    <property type="nucleotide sequence ID" value="NC_007926.1"/>
</dbReference>
<dbReference type="RefSeq" id="YP_534840.1">
    <property type="nucleotide sequence ID" value="NC_007926.1"/>
</dbReference>
<dbReference type="SMR" id="Q9Z431"/>
<dbReference type="UniPathway" id="UPA00824"/>
<dbReference type="GO" id="GO:0016853">
    <property type="term" value="F:isomerase activity"/>
    <property type="evidence" value="ECO:0007669"/>
    <property type="project" value="UniProtKB-KW"/>
</dbReference>
<dbReference type="GO" id="GO:0046244">
    <property type="term" value="P:salicylic acid catabolic process"/>
    <property type="evidence" value="ECO:0007669"/>
    <property type="project" value="UniProtKB-UniPathway"/>
</dbReference>
<dbReference type="CDD" id="cd00491">
    <property type="entry name" value="4Oxalocrotonate_Tautomerase"/>
    <property type="match status" value="1"/>
</dbReference>
<dbReference type="Gene3D" id="3.30.429.10">
    <property type="entry name" value="Macrophage Migration Inhibitory Factor"/>
    <property type="match status" value="1"/>
</dbReference>
<dbReference type="InterPro" id="IPR018191">
    <property type="entry name" value="4-OT"/>
</dbReference>
<dbReference type="InterPro" id="IPR004370">
    <property type="entry name" value="4-OT-like_dom"/>
</dbReference>
<dbReference type="InterPro" id="IPR014347">
    <property type="entry name" value="Tautomerase/MIF_sf"/>
</dbReference>
<dbReference type="NCBIfam" id="NF002571">
    <property type="entry name" value="PRK02220.1"/>
    <property type="match status" value="1"/>
</dbReference>
<dbReference type="NCBIfam" id="TIGR00013">
    <property type="entry name" value="taut"/>
    <property type="match status" value="1"/>
</dbReference>
<dbReference type="PANTHER" id="PTHR35530:SF1">
    <property type="entry name" value="2-HYDROXYMUCONATE TAUTOMERASE"/>
    <property type="match status" value="1"/>
</dbReference>
<dbReference type="PANTHER" id="PTHR35530">
    <property type="entry name" value="TAUTOMERASE-RELATED"/>
    <property type="match status" value="1"/>
</dbReference>
<dbReference type="Pfam" id="PF01361">
    <property type="entry name" value="Tautomerase"/>
    <property type="match status" value="1"/>
</dbReference>
<dbReference type="SUPFAM" id="SSF55331">
    <property type="entry name" value="Tautomerase/MIF"/>
    <property type="match status" value="1"/>
</dbReference>
<proteinExistence type="inferred from homology"/>